<evidence type="ECO:0000269" key="1">
    <source>
    </source>
</evidence>
<evidence type="ECO:0000303" key="2">
    <source>
    </source>
</evidence>
<evidence type="ECO:0000305" key="3"/>
<evidence type="ECO:0000305" key="4">
    <source>
    </source>
</evidence>
<evidence type="ECO:0000312" key="5">
    <source>
        <dbReference type="EMBL" id="AAG57844.1"/>
    </source>
</evidence>
<evidence type="ECO:0000312" key="6">
    <source>
        <dbReference type="EMBL" id="BAB37014.1"/>
    </source>
</evidence>
<evidence type="ECO:0000312" key="7">
    <source>
        <dbReference type="Proteomes" id="UP000000558"/>
    </source>
</evidence>
<accession>Q8X7Z8</accession>
<accession>A0A0H3JNG9</accession>
<accession>Q7ABA8</accession>
<organism>
    <name type="scientific">Escherichia coli O157:H7</name>
    <dbReference type="NCBI Taxonomy" id="83334"/>
    <lineage>
        <taxon>Bacteria</taxon>
        <taxon>Pseudomonadati</taxon>
        <taxon>Pseudomonadota</taxon>
        <taxon>Gammaproteobacteria</taxon>
        <taxon>Enterobacterales</taxon>
        <taxon>Enterobacteriaceae</taxon>
        <taxon>Escherichia</taxon>
    </lineage>
</organism>
<keyword id="KW-0058">Aromatic hydrocarbons catabolism</keyword>
<keyword id="KW-0216">Detoxification</keyword>
<keyword id="KW-1185">Reference proteome</keyword>
<proteinExistence type="predicted"/>
<feature type="chain" id="PRO_0000444037" description="Protein EcdD">
    <location>
        <begin position="1"/>
        <end position="78"/>
    </location>
</feature>
<dbReference type="EMBL" id="AE005174">
    <property type="protein sequence ID" value="AAG57844.1"/>
    <property type="molecule type" value="Genomic_DNA"/>
</dbReference>
<dbReference type="EMBL" id="BA000007">
    <property type="protein sequence ID" value="BAB37014.1"/>
    <property type="molecule type" value="Genomic_DNA"/>
</dbReference>
<dbReference type="PIR" id="G91077">
    <property type="entry name" value="G91077"/>
</dbReference>
<dbReference type="PIR" id="H85922">
    <property type="entry name" value="H85922"/>
</dbReference>
<dbReference type="RefSeq" id="WP_000562982.1">
    <property type="nucleotide sequence ID" value="NZ_VOAI01000003.1"/>
</dbReference>
<dbReference type="SMR" id="Q8X7Z8"/>
<dbReference type="STRING" id="155864.Z4045"/>
<dbReference type="KEGG" id="ece:Z4045"/>
<dbReference type="KEGG" id="ecs:ECs_3591"/>
<dbReference type="PATRIC" id="fig|386585.9.peg.3754"/>
<dbReference type="eggNOG" id="ENOG5032SBW">
    <property type="taxonomic scope" value="Bacteria"/>
</dbReference>
<dbReference type="HOGENOM" id="CLU_180856_1_1_6"/>
<dbReference type="OMA" id="AWEVYQC"/>
<dbReference type="Proteomes" id="UP000000558">
    <property type="component" value="Chromosome"/>
</dbReference>
<dbReference type="Proteomes" id="UP000002519">
    <property type="component" value="Chromosome"/>
</dbReference>
<dbReference type="GO" id="GO:0009056">
    <property type="term" value="P:catabolic process"/>
    <property type="evidence" value="ECO:0007669"/>
    <property type="project" value="UniProtKB-KW"/>
</dbReference>
<dbReference type="GO" id="GO:0009636">
    <property type="term" value="P:response to toxic substance"/>
    <property type="evidence" value="ECO:0007669"/>
    <property type="project" value="UniProtKB-KW"/>
</dbReference>
<dbReference type="InterPro" id="IPR047707">
    <property type="entry name" value="VdcD-like"/>
</dbReference>
<dbReference type="NCBIfam" id="NF041205">
    <property type="entry name" value="VdcD"/>
    <property type="match status" value="1"/>
</dbReference>
<reference key="1">
    <citation type="journal article" date="2001" name="DNA Res.">
        <title>Complete genome sequence of enterohemorrhagic Escherichia coli O157:H7 and genomic comparison with a laboratory strain K-12.</title>
        <authorList>
            <person name="Hayashi T."/>
            <person name="Makino K."/>
            <person name="Ohnishi M."/>
            <person name="Kurokawa K."/>
            <person name="Ishii K."/>
            <person name="Yokoyama K."/>
            <person name="Han C.-G."/>
            <person name="Ohtsubo E."/>
            <person name="Nakayama K."/>
            <person name="Murata T."/>
            <person name="Tanaka M."/>
            <person name="Tobe T."/>
            <person name="Iida T."/>
            <person name="Takami H."/>
            <person name="Honda T."/>
            <person name="Sasakawa C."/>
            <person name="Ogasawara N."/>
            <person name="Yasunaga T."/>
            <person name="Kuhara S."/>
            <person name="Shiba T."/>
            <person name="Hattori M."/>
            <person name="Shinagawa H."/>
        </authorList>
    </citation>
    <scope>NUCLEOTIDE SEQUENCE [LARGE SCALE GENOMIC DNA]</scope>
    <source>
        <strain evidence="6 7">O157:H7 / Sakai / RIMD 0509952 / EHEC</strain>
    </source>
</reference>
<reference key="2">
    <citation type="journal article" date="2001" name="Nature">
        <title>Genome sequence of enterohaemorrhagic Escherichia coli O157:H7.</title>
        <authorList>
            <person name="Perna N.T."/>
            <person name="Plunkett G. III"/>
            <person name="Burland V."/>
            <person name="Mau B."/>
            <person name="Glasner J.D."/>
            <person name="Rose D.J."/>
            <person name="Mayhew G.F."/>
            <person name="Evans P.S."/>
            <person name="Gregor J."/>
            <person name="Kirkpatrick H.A."/>
            <person name="Posfai G."/>
            <person name="Hackett J."/>
            <person name="Klink S."/>
            <person name="Boutin A."/>
            <person name="Shao Y."/>
            <person name="Miller L."/>
            <person name="Grotbeck E.J."/>
            <person name="Davis N.W."/>
            <person name="Lim A."/>
            <person name="Dimalanta E.T."/>
            <person name="Potamousis K."/>
            <person name="Apodaca J."/>
            <person name="Anantharaman T.S."/>
            <person name="Lin J."/>
            <person name="Yen G."/>
            <person name="Schwartz D.C."/>
            <person name="Welch R.A."/>
            <person name="Blattner F.R."/>
        </authorList>
    </citation>
    <scope>NUCLEOTIDE SEQUENCE [LARGE SCALE GENOMIC DNA]</scope>
    <source>
        <strain evidence="5">O157:H7 / EDL933 / ATCC 700927 / EHEC</strain>
    </source>
</reference>
<reference key="3">
    <citation type="journal article" date="2005" name="Genomics">
        <title>Distribution of genes encoding the microbial non-oxidative reversible hydroxyarylic acid decarboxylases/phenol carboxylases.</title>
        <authorList>
            <person name="Lupa B."/>
            <person name="Lyon D."/>
            <person name="Gibbs M.D."/>
            <person name="Reeves R.A."/>
            <person name="Wiegel J."/>
        </authorList>
    </citation>
    <scope>FUNCTION</scope>
    <source>
        <strain>O157:H7 / EDL933 / ATCC 700927 / EHEC</strain>
    </source>
</reference>
<protein>
    <recommendedName>
        <fullName evidence="4">Protein EcdD</fullName>
    </recommendedName>
    <alternativeName>
        <fullName evidence="2">Phenolic acid decarboxylase subunit D</fullName>
        <shortName evidence="2">PAD</shortName>
    </alternativeName>
</protein>
<gene>
    <name evidence="2" type="primary">ecdD</name>
    <name evidence="6" type="ordered locus">ECs3591</name>
    <name type="ordered locus">Z4045</name>
</gene>
<sequence>MICPRCADEQIEVMAKSPVKDVWTVYQCQHCLYTWRDTEPLRRTSREHYPEAFRMTQKDIDDAPMVPSIPPLLAEGKR</sequence>
<comment type="function">
    <text evidence="1">Involved in the non-oxidative decarboxylation and detoxification of phenolic derivatives under anaerobic conditions, however the precise biochemical function in metabolism of phenolic acid is unknown.</text>
</comment>
<comment type="miscellaneous">
    <text evidence="3">It is not known, if phenolic acid decarboxylase forms a complex composed of EdcB, EdcC and EdcD. The term subunit is often used in reference to the operon, however there is no experimental evidence to prove the existence of the complex.</text>
</comment>
<name>ECDD_ECO57</name>